<dbReference type="EC" id="4.4.1.21"/>
<dbReference type="EMBL" id="AE014074">
    <property type="protein sequence ID" value="AAM79991.1"/>
    <property type="molecule type" value="Genomic_DNA"/>
</dbReference>
<dbReference type="RefSeq" id="WP_002988938.1">
    <property type="nucleotide sequence ID" value="NC_004070.1"/>
</dbReference>
<dbReference type="SMR" id="P0DC26"/>
<dbReference type="KEGG" id="spg:SpyM3_1384"/>
<dbReference type="HOGENOM" id="CLU_107531_2_1_9"/>
<dbReference type="Proteomes" id="UP000000564">
    <property type="component" value="Chromosome"/>
</dbReference>
<dbReference type="GO" id="GO:0005506">
    <property type="term" value="F:iron ion binding"/>
    <property type="evidence" value="ECO:0007669"/>
    <property type="project" value="InterPro"/>
</dbReference>
<dbReference type="GO" id="GO:0043768">
    <property type="term" value="F:S-ribosylhomocysteine lyase activity"/>
    <property type="evidence" value="ECO:0007669"/>
    <property type="project" value="UniProtKB-UniRule"/>
</dbReference>
<dbReference type="GO" id="GO:0009372">
    <property type="term" value="P:quorum sensing"/>
    <property type="evidence" value="ECO:0007669"/>
    <property type="project" value="UniProtKB-UniRule"/>
</dbReference>
<dbReference type="Gene3D" id="3.30.1360.80">
    <property type="entry name" value="S-ribosylhomocysteinase (LuxS)"/>
    <property type="match status" value="1"/>
</dbReference>
<dbReference type="HAMAP" id="MF_00091">
    <property type="entry name" value="LuxS"/>
    <property type="match status" value="1"/>
</dbReference>
<dbReference type="InterPro" id="IPR037005">
    <property type="entry name" value="LuxS_sf"/>
</dbReference>
<dbReference type="InterPro" id="IPR011249">
    <property type="entry name" value="Metalloenz_LuxS/M16"/>
</dbReference>
<dbReference type="InterPro" id="IPR003815">
    <property type="entry name" value="S-ribosylhomocysteinase"/>
</dbReference>
<dbReference type="NCBIfam" id="NF002607">
    <property type="entry name" value="PRK02260.2-5"/>
    <property type="match status" value="1"/>
</dbReference>
<dbReference type="NCBIfam" id="NF002608">
    <property type="entry name" value="PRK02260.3-1"/>
    <property type="match status" value="1"/>
</dbReference>
<dbReference type="PANTHER" id="PTHR35799">
    <property type="entry name" value="S-RIBOSYLHOMOCYSTEINE LYASE"/>
    <property type="match status" value="1"/>
</dbReference>
<dbReference type="PANTHER" id="PTHR35799:SF1">
    <property type="entry name" value="S-RIBOSYLHOMOCYSTEINE LYASE"/>
    <property type="match status" value="1"/>
</dbReference>
<dbReference type="Pfam" id="PF02664">
    <property type="entry name" value="LuxS"/>
    <property type="match status" value="1"/>
</dbReference>
<dbReference type="PIRSF" id="PIRSF006160">
    <property type="entry name" value="AI2"/>
    <property type="match status" value="1"/>
</dbReference>
<dbReference type="PRINTS" id="PR01487">
    <property type="entry name" value="LUXSPROTEIN"/>
</dbReference>
<dbReference type="SUPFAM" id="SSF63411">
    <property type="entry name" value="LuxS/MPP-like metallohydrolase"/>
    <property type="match status" value="1"/>
</dbReference>
<name>LUXS_STRP3</name>
<reference key="1">
    <citation type="journal article" date="2002" name="Proc. Natl. Acad. Sci. U.S.A.">
        <title>Genome sequence of a serotype M3 strain of group A Streptococcus: phage-encoded toxins, the high-virulence phenotype, and clone emergence.</title>
        <authorList>
            <person name="Beres S.B."/>
            <person name="Sylva G.L."/>
            <person name="Barbian K.D."/>
            <person name="Lei B."/>
            <person name="Hoff J.S."/>
            <person name="Mammarella N.D."/>
            <person name="Liu M.-Y."/>
            <person name="Smoot J.C."/>
            <person name="Porcella S.F."/>
            <person name="Parkins L.D."/>
            <person name="Campbell D.S."/>
            <person name="Smith T.M."/>
            <person name="McCormick J.K."/>
            <person name="Leung D.Y.M."/>
            <person name="Schlievert P.M."/>
            <person name="Musser J.M."/>
        </authorList>
    </citation>
    <scope>NUCLEOTIDE SEQUENCE [LARGE SCALE GENOMIC DNA]</scope>
    <source>
        <strain>ATCC BAA-595 / MGAS315</strain>
    </source>
</reference>
<evidence type="ECO:0000250" key="1"/>
<evidence type="ECO:0000305" key="2"/>
<keyword id="KW-0071">Autoinducer synthesis</keyword>
<keyword id="KW-0408">Iron</keyword>
<keyword id="KW-0456">Lyase</keyword>
<keyword id="KW-0479">Metal-binding</keyword>
<keyword id="KW-0673">Quorum sensing</keyword>
<feature type="chain" id="PRO_0000172269" description="S-ribosylhomocysteine lyase">
    <location>
        <begin position="1"/>
        <end position="160"/>
    </location>
</feature>
<feature type="binding site" evidence="1">
    <location>
        <position position="57"/>
    </location>
    <ligand>
        <name>Fe cation</name>
        <dbReference type="ChEBI" id="CHEBI:24875"/>
    </ligand>
</feature>
<feature type="binding site" evidence="1">
    <location>
        <position position="61"/>
    </location>
    <ligand>
        <name>Fe cation</name>
        <dbReference type="ChEBI" id="CHEBI:24875"/>
    </ligand>
</feature>
<feature type="binding site" evidence="1">
    <location>
        <position position="127"/>
    </location>
    <ligand>
        <name>Fe cation</name>
        <dbReference type="ChEBI" id="CHEBI:24875"/>
    </ligand>
</feature>
<comment type="function">
    <text evidence="1">Involved in the synthesis of autoinducer 2 (AI-2) which is secreted by bacteria and is used to communicate both the cell density and the metabolic potential of the environment. The regulation of gene expression in response to changes in cell density is called quorum sensing. Catalyzes the transformation of S-ribosylhomocysteine (RHC) to homocysteine (HC) and 4,5-dihydroxy-2,3-pentadione (DPD) (By similarity).</text>
</comment>
<comment type="catalytic activity">
    <reaction>
        <text>S-(5-deoxy-D-ribos-5-yl)-L-homocysteine = (S)-4,5-dihydroxypentane-2,3-dione + L-homocysteine</text>
        <dbReference type="Rhea" id="RHEA:17753"/>
        <dbReference type="ChEBI" id="CHEBI:29484"/>
        <dbReference type="ChEBI" id="CHEBI:58195"/>
        <dbReference type="ChEBI" id="CHEBI:58199"/>
        <dbReference type="EC" id="4.4.1.21"/>
    </reaction>
</comment>
<comment type="cofactor">
    <cofactor evidence="1">
        <name>Fe cation</name>
        <dbReference type="ChEBI" id="CHEBI:24875"/>
    </cofactor>
    <text evidence="1">Binds 1 Fe cation per subunit.</text>
</comment>
<comment type="subunit">
    <text evidence="1">Homodimer.</text>
</comment>
<comment type="similarity">
    <text evidence="2">Belongs to the LuxS family.</text>
</comment>
<accession>P0DC26</accession>
<accession>P0A3P8</accession>
<accession>Q99YL7</accession>
<accession>Q9EVB4</accession>
<proteinExistence type="inferred from homology"/>
<protein>
    <recommendedName>
        <fullName>S-ribosylhomocysteine lyase</fullName>
        <ecNumber>4.4.1.21</ecNumber>
    </recommendedName>
    <alternativeName>
        <fullName>AI-2 synthesis protein</fullName>
    </alternativeName>
    <alternativeName>
        <fullName>Autoinducer-2 production protein LuxS</fullName>
    </alternativeName>
</protein>
<organism>
    <name type="scientific">Streptococcus pyogenes serotype M3 (strain ATCC BAA-595 / MGAS315)</name>
    <dbReference type="NCBI Taxonomy" id="198466"/>
    <lineage>
        <taxon>Bacteria</taxon>
        <taxon>Bacillati</taxon>
        <taxon>Bacillota</taxon>
        <taxon>Bacilli</taxon>
        <taxon>Lactobacillales</taxon>
        <taxon>Streptococcaceae</taxon>
        <taxon>Streptococcus</taxon>
    </lineage>
</organism>
<gene>
    <name type="primary">luxS</name>
    <name type="ordered locus">SpyM3_1384</name>
</gene>
<sequence length="160" mass="17979">MTKEVIVESFELDHTIVKAPYVRLISEEFGPKGDRITNFDVRLVQPNQNSIETAGLHTIEHLLAKLIRQRIDGMIDCSPFGCRTGFHLIMWGKHSSTDIAKVIKSSLEEIATGITWEDVPGTTLESCGNYKDHSLFAAKEWAQLIIDQGISDDPFSRHVI</sequence>